<dbReference type="EC" id="2.5.1.16" evidence="1"/>
<dbReference type="EMBL" id="CP001138">
    <property type="protein sequence ID" value="ACH48827.1"/>
    <property type="molecule type" value="Genomic_DNA"/>
</dbReference>
<dbReference type="RefSeq" id="WP_000829968.1">
    <property type="nucleotide sequence ID" value="NC_011149.1"/>
</dbReference>
<dbReference type="SMR" id="B5F815"/>
<dbReference type="KEGG" id="sea:SeAg_B0198"/>
<dbReference type="HOGENOM" id="CLU_048199_0_0_6"/>
<dbReference type="UniPathway" id="UPA00248">
    <property type="reaction ID" value="UER00314"/>
</dbReference>
<dbReference type="Proteomes" id="UP000008819">
    <property type="component" value="Chromosome"/>
</dbReference>
<dbReference type="GO" id="GO:0005829">
    <property type="term" value="C:cytosol"/>
    <property type="evidence" value="ECO:0007669"/>
    <property type="project" value="TreeGrafter"/>
</dbReference>
<dbReference type="GO" id="GO:0004766">
    <property type="term" value="F:spermidine synthase activity"/>
    <property type="evidence" value="ECO:0007669"/>
    <property type="project" value="UniProtKB-UniRule"/>
</dbReference>
<dbReference type="GO" id="GO:0008295">
    <property type="term" value="P:spermidine biosynthetic process"/>
    <property type="evidence" value="ECO:0007669"/>
    <property type="project" value="UniProtKB-UniRule"/>
</dbReference>
<dbReference type="CDD" id="cd02440">
    <property type="entry name" value="AdoMet_MTases"/>
    <property type="match status" value="1"/>
</dbReference>
<dbReference type="FunFam" id="2.30.140.10:FF:000002">
    <property type="entry name" value="Polyamine aminopropyltransferase"/>
    <property type="match status" value="1"/>
</dbReference>
<dbReference type="FunFam" id="3.40.50.150:FF:000026">
    <property type="entry name" value="Polyamine aminopropyltransferase"/>
    <property type="match status" value="1"/>
</dbReference>
<dbReference type="Gene3D" id="2.30.140.10">
    <property type="entry name" value="Spermidine synthase, tetramerisation domain"/>
    <property type="match status" value="1"/>
</dbReference>
<dbReference type="Gene3D" id="3.40.50.150">
    <property type="entry name" value="Vaccinia Virus protein VP39"/>
    <property type="match status" value="1"/>
</dbReference>
<dbReference type="HAMAP" id="MF_00198">
    <property type="entry name" value="Spermidine_synth"/>
    <property type="match status" value="1"/>
</dbReference>
<dbReference type="InterPro" id="IPR030374">
    <property type="entry name" value="PABS"/>
</dbReference>
<dbReference type="InterPro" id="IPR030373">
    <property type="entry name" value="PABS_CS"/>
</dbReference>
<dbReference type="InterPro" id="IPR029063">
    <property type="entry name" value="SAM-dependent_MTases_sf"/>
</dbReference>
<dbReference type="InterPro" id="IPR001045">
    <property type="entry name" value="Spermi_synthase"/>
</dbReference>
<dbReference type="InterPro" id="IPR035246">
    <property type="entry name" value="Spermidine_synt_N"/>
</dbReference>
<dbReference type="InterPro" id="IPR037163">
    <property type="entry name" value="Spermidine_synt_N_sf"/>
</dbReference>
<dbReference type="NCBIfam" id="NF037959">
    <property type="entry name" value="MFS_SpdSyn"/>
    <property type="match status" value="1"/>
</dbReference>
<dbReference type="NCBIfam" id="NF002010">
    <property type="entry name" value="PRK00811.1"/>
    <property type="match status" value="1"/>
</dbReference>
<dbReference type="NCBIfam" id="TIGR00417">
    <property type="entry name" value="speE"/>
    <property type="match status" value="1"/>
</dbReference>
<dbReference type="PANTHER" id="PTHR11558:SF11">
    <property type="entry name" value="SPERMIDINE SYNTHASE"/>
    <property type="match status" value="1"/>
</dbReference>
<dbReference type="PANTHER" id="PTHR11558">
    <property type="entry name" value="SPERMIDINE/SPERMINE SYNTHASE"/>
    <property type="match status" value="1"/>
</dbReference>
<dbReference type="Pfam" id="PF17284">
    <property type="entry name" value="Spermine_synt_N"/>
    <property type="match status" value="1"/>
</dbReference>
<dbReference type="Pfam" id="PF01564">
    <property type="entry name" value="Spermine_synth"/>
    <property type="match status" value="1"/>
</dbReference>
<dbReference type="SUPFAM" id="SSF53335">
    <property type="entry name" value="S-adenosyl-L-methionine-dependent methyltransferases"/>
    <property type="match status" value="1"/>
</dbReference>
<dbReference type="PROSITE" id="PS01330">
    <property type="entry name" value="PABS_1"/>
    <property type="match status" value="1"/>
</dbReference>
<dbReference type="PROSITE" id="PS51006">
    <property type="entry name" value="PABS_2"/>
    <property type="match status" value="1"/>
</dbReference>
<protein>
    <recommendedName>
        <fullName evidence="1">Polyamine aminopropyltransferase</fullName>
    </recommendedName>
    <alternativeName>
        <fullName evidence="1">Putrescine aminopropyltransferase</fullName>
        <shortName evidence="1">PAPT</shortName>
    </alternativeName>
    <alternativeName>
        <fullName evidence="1">Spermidine synthase</fullName>
        <shortName evidence="1">SPDS</shortName>
        <shortName evidence="1">SPDSY</shortName>
        <ecNumber evidence="1">2.5.1.16</ecNumber>
    </alternativeName>
</protein>
<evidence type="ECO:0000255" key="1">
    <source>
        <dbReference type="HAMAP-Rule" id="MF_00198"/>
    </source>
</evidence>
<feature type="chain" id="PRO_1000099293" description="Polyamine aminopropyltransferase">
    <location>
        <begin position="1"/>
        <end position="286"/>
    </location>
</feature>
<feature type="domain" description="PABS" evidence="1">
    <location>
        <begin position="5"/>
        <end position="238"/>
    </location>
</feature>
<feature type="active site" description="Proton acceptor" evidence="1">
    <location>
        <position position="158"/>
    </location>
</feature>
<feature type="binding site" evidence="1">
    <location>
        <position position="33"/>
    </location>
    <ligand>
        <name>S-methyl-5'-thioadenosine</name>
        <dbReference type="ChEBI" id="CHEBI:17509"/>
    </ligand>
</feature>
<feature type="binding site" evidence="1">
    <location>
        <position position="64"/>
    </location>
    <ligand>
        <name>spermidine</name>
        <dbReference type="ChEBI" id="CHEBI:57834"/>
    </ligand>
</feature>
<feature type="binding site" evidence="1">
    <location>
        <position position="88"/>
    </location>
    <ligand>
        <name>spermidine</name>
        <dbReference type="ChEBI" id="CHEBI:57834"/>
    </ligand>
</feature>
<feature type="binding site" evidence="1">
    <location>
        <position position="108"/>
    </location>
    <ligand>
        <name>S-methyl-5'-thioadenosine</name>
        <dbReference type="ChEBI" id="CHEBI:17509"/>
    </ligand>
</feature>
<feature type="binding site" evidence="1">
    <location>
        <begin position="140"/>
        <end position="141"/>
    </location>
    <ligand>
        <name>S-methyl-5'-thioadenosine</name>
        <dbReference type="ChEBI" id="CHEBI:17509"/>
    </ligand>
</feature>
<feature type="binding site" evidence="1">
    <location>
        <begin position="158"/>
        <end position="161"/>
    </location>
    <ligand>
        <name>spermidine</name>
        <dbReference type="ChEBI" id="CHEBI:57834"/>
    </ligand>
</feature>
<feature type="binding site" evidence="1">
    <location>
        <position position="165"/>
    </location>
    <ligand>
        <name>S-methyl-5'-thioadenosine</name>
        <dbReference type="ChEBI" id="CHEBI:17509"/>
    </ligand>
</feature>
<proteinExistence type="inferred from homology"/>
<gene>
    <name evidence="1" type="primary">speE</name>
    <name type="ordered locus">SeAg_B0198</name>
</gene>
<comment type="function">
    <text evidence="1">Catalyzes the irreversible transfer of a propylamine group from the amino donor S-adenosylmethioninamine (decarboxy-AdoMet) to putrescine (1,4-diaminobutane) to yield spermidine.</text>
</comment>
<comment type="catalytic activity">
    <reaction evidence="1">
        <text>S-adenosyl 3-(methylsulfanyl)propylamine + putrescine = S-methyl-5'-thioadenosine + spermidine + H(+)</text>
        <dbReference type="Rhea" id="RHEA:12721"/>
        <dbReference type="ChEBI" id="CHEBI:15378"/>
        <dbReference type="ChEBI" id="CHEBI:17509"/>
        <dbReference type="ChEBI" id="CHEBI:57443"/>
        <dbReference type="ChEBI" id="CHEBI:57834"/>
        <dbReference type="ChEBI" id="CHEBI:326268"/>
        <dbReference type="EC" id="2.5.1.16"/>
    </reaction>
</comment>
<comment type="pathway">
    <text evidence="1">Amine and polyamine biosynthesis; spermidine biosynthesis; spermidine from putrescine: step 1/1.</text>
</comment>
<comment type="subunit">
    <text evidence="1">Homodimer or homotetramer.</text>
</comment>
<comment type="subcellular location">
    <subcellularLocation>
        <location evidence="1">Cytoplasm</location>
    </subcellularLocation>
</comment>
<comment type="similarity">
    <text evidence="1">Belongs to the spermidine/spermine synthase family.</text>
</comment>
<organism>
    <name type="scientific">Salmonella agona (strain SL483)</name>
    <dbReference type="NCBI Taxonomy" id="454166"/>
    <lineage>
        <taxon>Bacteria</taxon>
        <taxon>Pseudomonadati</taxon>
        <taxon>Pseudomonadota</taxon>
        <taxon>Gammaproteobacteria</taxon>
        <taxon>Enterobacterales</taxon>
        <taxon>Enterobacteriaceae</taxon>
        <taxon>Salmonella</taxon>
    </lineage>
</organism>
<sequence length="286" mass="32095">MAENTMWHETLHDQFGQYFAVDNVLYHEKTDHQDLIIFENAAFGRVMALDGVVQTTERDEFIYHEMMTHVPLLAHGHAKHVLIIGGGDGAMLREVTRHKNVETITMVEIDAGVVSFCRQYLPNHNAGSYDDPRFTLVIDDGVNFVNQTHQTFDVIISDCTDPIGPGESLFTSAFYEGCKRCLNPGGIFVAQNGVCFLQQDEALDSHRKLSHYFSDVGFYQAAIPTYYGGIMTFAWATDNDALRHLSSEIIQARFHAAGLKCRYYNPAIHAAAFALPQYLHDALSAQ</sequence>
<accession>B5F815</accession>
<reference key="1">
    <citation type="journal article" date="2011" name="J. Bacteriol.">
        <title>Comparative genomics of 28 Salmonella enterica isolates: evidence for CRISPR-mediated adaptive sublineage evolution.</title>
        <authorList>
            <person name="Fricke W.F."/>
            <person name="Mammel M.K."/>
            <person name="McDermott P.F."/>
            <person name="Tartera C."/>
            <person name="White D.G."/>
            <person name="Leclerc J.E."/>
            <person name="Ravel J."/>
            <person name="Cebula T.A."/>
        </authorList>
    </citation>
    <scope>NUCLEOTIDE SEQUENCE [LARGE SCALE GENOMIC DNA]</scope>
    <source>
        <strain>SL483</strain>
    </source>
</reference>
<keyword id="KW-0963">Cytoplasm</keyword>
<keyword id="KW-0620">Polyamine biosynthesis</keyword>
<keyword id="KW-0745">Spermidine biosynthesis</keyword>
<keyword id="KW-0808">Transferase</keyword>
<name>SPEE_SALA4</name>